<dbReference type="EC" id="4.1.2.4" evidence="1 2 3 5"/>
<dbReference type="EMBL" id="X03224">
    <property type="protein sequence ID" value="CAA26974.1"/>
    <property type="molecule type" value="Genomic_DNA"/>
</dbReference>
<dbReference type="EMBL" id="U14003">
    <property type="protein sequence ID" value="AAA97277.1"/>
    <property type="molecule type" value="Genomic_DNA"/>
</dbReference>
<dbReference type="EMBL" id="U00096">
    <property type="protein sequence ID" value="AAC77334.1"/>
    <property type="molecule type" value="Genomic_DNA"/>
</dbReference>
<dbReference type="EMBL" id="AP009048">
    <property type="protein sequence ID" value="BAE78370.1"/>
    <property type="molecule type" value="Genomic_DNA"/>
</dbReference>
<dbReference type="PIR" id="A01102">
    <property type="entry name" value="ADECD"/>
</dbReference>
<dbReference type="RefSeq" id="NP_418798.1">
    <property type="nucleotide sequence ID" value="NC_000913.3"/>
</dbReference>
<dbReference type="RefSeq" id="WP_001298497.1">
    <property type="nucleotide sequence ID" value="NZ_LN832404.1"/>
</dbReference>
<dbReference type="PDB" id="1JCJ">
    <property type="method" value="X-ray"/>
    <property type="resolution" value="1.10 A"/>
    <property type="chains" value="A/B=1-259"/>
</dbReference>
<dbReference type="PDB" id="1JCL">
    <property type="method" value="X-ray"/>
    <property type="resolution" value="1.05 A"/>
    <property type="chains" value="A/B=1-259"/>
</dbReference>
<dbReference type="PDB" id="1KTN">
    <property type="method" value="X-ray"/>
    <property type="resolution" value="1.40 A"/>
    <property type="chains" value="A/B=1-250"/>
</dbReference>
<dbReference type="PDB" id="1P1X">
    <property type="method" value="X-ray"/>
    <property type="resolution" value="0.99 A"/>
    <property type="chains" value="A/B=1-259"/>
</dbReference>
<dbReference type="PDB" id="5EKY">
    <property type="method" value="X-ray"/>
    <property type="resolution" value="1.10 A"/>
    <property type="chains" value="A=1-259"/>
</dbReference>
<dbReference type="PDB" id="5EL1">
    <property type="method" value="X-ray"/>
    <property type="resolution" value="1.25 A"/>
    <property type="chains" value="A=1-259"/>
</dbReference>
<dbReference type="PDB" id="5EMU">
    <property type="method" value="X-ray"/>
    <property type="resolution" value="1.50 A"/>
    <property type="chains" value="A=1-259"/>
</dbReference>
<dbReference type="PDB" id="6Z9H">
    <property type="method" value="X-ray"/>
    <property type="resolution" value="1.72 A"/>
    <property type="chains" value="A/B=2-259"/>
</dbReference>
<dbReference type="PDB" id="6Z9I">
    <property type="method" value="X-ray"/>
    <property type="resolution" value="1.86 A"/>
    <property type="chains" value="A/B=1-250"/>
</dbReference>
<dbReference type="PDB" id="6Z9J">
    <property type="method" value="X-ray"/>
    <property type="resolution" value="1.50 A"/>
    <property type="chains" value="A/B=1-250"/>
</dbReference>
<dbReference type="PDB" id="7P75">
    <property type="method" value="X-ray"/>
    <property type="resolution" value="1.23 A"/>
    <property type="chains" value="AAA/BBB=1-259"/>
</dbReference>
<dbReference type="PDB" id="8FMD">
    <property type="method" value="X-ray"/>
    <property type="resolution" value="2.20 A"/>
    <property type="chains" value="A/B=2-259"/>
</dbReference>
<dbReference type="PDB" id="8FOR">
    <property type="method" value="X-ray"/>
    <property type="resolution" value="2.20 A"/>
    <property type="chains" value="A/B/C/D/E/F=2-259"/>
</dbReference>
<dbReference type="PDBsum" id="1JCJ"/>
<dbReference type="PDBsum" id="1JCL"/>
<dbReference type="PDBsum" id="1KTN"/>
<dbReference type="PDBsum" id="1P1X"/>
<dbReference type="PDBsum" id="5EKY"/>
<dbReference type="PDBsum" id="5EL1"/>
<dbReference type="PDBsum" id="5EMU"/>
<dbReference type="PDBsum" id="6Z9H"/>
<dbReference type="PDBsum" id="6Z9I"/>
<dbReference type="PDBsum" id="6Z9J"/>
<dbReference type="PDBsum" id="7P75"/>
<dbReference type="PDBsum" id="8FMD"/>
<dbReference type="PDBsum" id="8FOR"/>
<dbReference type="SASBDB" id="P0A6L0"/>
<dbReference type="SMR" id="P0A6L0"/>
<dbReference type="BioGRID" id="4263350">
    <property type="interactions" value="31"/>
</dbReference>
<dbReference type="FunCoup" id="P0A6L0">
    <property type="interactions" value="668"/>
</dbReference>
<dbReference type="IntAct" id="P0A6L0">
    <property type="interactions" value="8"/>
</dbReference>
<dbReference type="STRING" id="511145.b4381"/>
<dbReference type="DrugBank" id="DB04087">
    <property type="generic name" value="Open Form of 2'-Deoxy-Ribofuranose-5'-Phosphate"/>
</dbReference>
<dbReference type="iPTMnet" id="P0A6L0"/>
<dbReference type="jPOST" id="P0A6L0"/>
<dbReference type="PaxDb" id="511145-b4381"/>
<dbReference type="EnsemblBacteria" id="AAC77334">
    <property type="protein sequence ID" value="AAC77334"/>
    <property type="gene ID" value="b4381"/>
</dbReference>
<dbReference type="GeneID" id="86862495"/>
<dbReference type="GeneID" id="948902"/>
<dbReference type="KEGG" id="ecj:JW4344"/>
<dbReference type="KEGG" id="eco:b4381"/>
<dbReference type="KEGG" id="ecoc:C3026_23675"/>
<dbReference type="PATRIC" id="fig|1411691.4.peg.2304"/>
<dbReference type="EchoBASE" id="EB0217"/>
<dbReference type="eggNOG" id="COG0274">
    <property type="taxonomic scope" value="Bacteria"/>
</dbReference>
<dbReference type="HOGENOM" id="CLU_053595_3_1_6"/>
<dbReference type="InParanoid" id="P0A6L0"/>
<dbReference type="OMA" id="MNACIPP"/>
<dbReference type="OrthoDB" id="6579831at2"/>
<dbReference type="PhylomeDB" id="P0A6L0"/>
<dbReference type="BioCyc" id="EcoCyc:DEOXYRIBOSE-P-ALD-MONOMER"/>
<dbReference type="BioCyc" id="MetaCyc:DEOXYRIBOSE-P-ALD-MONOMER"/>
<dbReference type="BRENDA" id="4.1.2.4">
    <property type="organism ID" value="2026"/>
</dbReference>
<dbReference type="SABIO-RK" id="P0A6L0"/>
<dbReference type="UniPathway" id="UPA00002">
    <property type="reaction ID" value="UER00468"/>
</dbReference>
<dbReference type="EvolutionaryTrace" id="P0A6L0"/>
<dbReference type="PRO" id="PR:P0A6L0"/>
<dbReference type="Proteomes" id="UP000000625">
    <property type="component" value="Chromosome"/>
</dbReference>
<dbReference type="GO" id="GO:0005829">
    <property type="term" value="C:cytosol"/>
    <property type="evidence" value="ECO:0000314"/>
    <property type="project" value="EcoCyc"/>
</dbReference>
<dbReference type="GO" id="GO:0016020">
    <property type="term" value="C:membrane"/>
    <property type="evidence" value="ECO:0007005"/>
    <property type="project" value="UniProtKB"/>
</dbReference>
<dbReference type="GO" id="GO:0004139">
    <property type="term" value="F:deoxyribose-phosphate aldolase activity"/>
    <property type="evidence" value="ECO:0000314"/>
    <property type="project" value="EcoCyc"/>
</dbReference>
<dbReference type="GO" id="GO:0016829">
    <property type="term" value="F:lyase activity"/>
    <property type="evidence" value="ECO:0000314"/>
    <property type="project" value="EcoliWiki"/>
</dbReference>
<dbReference type="GO" id="GO:0006018">
    <property type="term" value="P:2-deoxyribose 1-phosphate catabolic process"/>
    <property type="evidence" value="ECO:0007669"/>
    <property type="project" value="UniProtKB-UniRule"/>
</dbReference>
<dbReference type="GO" id="GO:0016052">
    <property type="term" value="P:carbohydrate catabolic process"/>
    <property type="evidence" value="ECO:0000314"/>
    <property type="project" value="EcoliWiki"/>
</dbReference>
<dbReference type="GO" id="GO:0009264">
    <property type="term" value="P:deoxyribonucleotide catabolic process"/>
    <property type="evidence" value="ECO:0000315"/>
    <property type="project" value="EcoliWiki"/>
</dbReference>
<dbReference type="GO" id="GO:0006974">
    <property type="term" value="P:DNA damage response"/>
    <property type="evidence" value="ECO:0000270"/>
    <property type="project" value="EcoliWiki"/>
</dbReference>
<dbReference type="GO" id="GO:0015949">
    <property type="term" value="P:nucleobase-containing small molecule interconversion"/>
    <property type="evidence" value="ECO:0000315"/>
    <property type="project" value="EcoliWiki"/>
</dbReference>
<dbReference type="CDD" id="cd00959">
    <property type="entry name" value="DeoC"/>
    <property type="match status" value="1"/>
</dbReference>
<dbReference type="FunFam" id="3.20.20.70:FF:000034">
    <property type="entry name" value="Deoxyribose-phosphate aldolase"/>
    <property type="match status" value="1"/>
</dbReference>
<dbReference type="Gene3D" id="3.20.20.70">
    <property type="entry name" value="Aldolase class I"/>
    <property type="match status" value="1"/>
</dbReference>
<dbReference type="HAMAP" id="MF_00592">
    <property type="entry name" value="DeoC_type2"/>
    <property type="match status" value="1"/>
</dbReference>
<dbReference type="InterPro" id="IPR013785">
    <property type="entry name" value="Aldolase_TIM"/>
</dbReference>
<dbReference type="InterPro" id="IPR011343">
    <property type="entry name" value="DeoC"/>
</dbReference>
<dbReference type="InterPro" id="IPR002915">
    <property type="entry name" value="DeoC/FbaB/LacD_aldolase"/>
</dbReference>
<dbReference type="InterPro" id="IPR023649">
    <property type="entry name" value="DeoC_typeII"/>
</dbReference>
<dbReference type="NCBIfam" id="TIGR00126">
    <property type="entry name" value="deoC"/>
    <property type="match status" value="1"/>
</dbReference>
<dbReference type="PANTHER" id="PTHR10889">
    <property type="entry name" value="DEOXYRIBOSE-PHOSPHATE ALDOLASE"/>
    <property type="match status" value="1"/>
</dbReference>
<dbReference type="PANTHER" id="PTHR10889:SF3">
    <property type="entry name" value="DEOXYRIBOSE-PHOSPHATE ALDOLASE"/>
    <property type="match status" value="1"/>
</dbReference>
<dbReference type="Pfam" id="PF01791">
    <property type="entry name" value="DeoC"/>
    <property type="match status" value="1"/>
</dbReference>
<dbReference type="PIRSF" id="PIRSF001357">
    <property type="entry name" value="DeoC"/>
    <property type="match status" value="1"/>
</dbReference>
<dbReference type="SMART" id="SM01133">
    <property type="entry name" value="DeoC"/>
    <property type="match status" value="1"/>
</dbReference>
<dbReference type="SUPFAM" id="SSF51569">
    <property type="entry name" value="Aldolase"/>
    <property type="match status" value="1"/>
</dbReference>
<protein>
    <recommendedName>
        <fullName evidence="1 12">Deoxyribose-phosphate aldolase</fullName>
        <shortName evidence="1 10 11">DERA</shortName>
        <ecNumber evidence="1 2 3 5">4.1.2.4</ecNumber>
    </recommendedName>
    <alternativeName>
        <fullName evidence="1 8 12">2-deoxy-D-ribose 5-phosphate aldolase</fullName>
    </alternativeName>
    <alternativeName>
        <fullName evidence="1 12">Phosphodeoxyriboaldolase</fullName>
        <shortName evidence="1 12">Deoxyriboaldolase</shortName>
    </alternativeName>
</protein>
<accession>P0A6L0</accession>
<accession>P00882</accession>
<accession>Q2M5T6</accession>
<evidence type="ECO:0000255" key="1">
    <source>
        <dbReference type="HAMAP-Rule" id="MF_00592"/>
    </source>
</evidence>
<evidence type="ECO:0000269" key="2">
    <source>
    </source>
</evidence>
<evidence type="ECO:0000269" key="3">
    <source>
    </source>
</evidence>
<evidence type="ECO:0000269" key="4">
    <source>
    </source>
</evidence>
<evidence type="ECO:0000269" key="5">
    <source>
    </source>
</evidence>
<evidence type="ECO:0000269" key="6">
    <source>
    </source>
</evidence>
<evidence type="ECO:0000269" key="7">
    <source ref="5"/>
</evidence>
<evidence type="ECO:0000303" key="8">
    <source>
    </source>
</evidence>
<evidence type="ECO:0000303" key="9">
    <source>
    </source>
</evidence>
<evidence type="ECO:0000303" key="10">
    <source>
    </source>
</evidence>
<evidence type="ECO:0000303" key="11">
    <source ref="5"/>
</evidence>
<evidence type="ECO:0000305" key="12"/>
<evidence type="ECO:0000305" key="13">
    <source>
    </source>
</evidence>
<evidence type="ECO:0000305" key="14">
    <source>
    </source>
</evidence>
<evidence type="ECO:0007744" key="15">
    <source>
        <dbReference type="PDB" id="1JCJ"/>
    </source>
</evidence>
<evidence type="ECO:0007744" key="16">
    <source>
        <dbReference type="PDB" id="1JCL"/>
    </source>
</evidence>
<evidence type="ECO:0007744" key="17">
    <source>
        <dbReference type="PDB" id="1KTN"/>
    </source>
</evidence>
<evidence type="ECO:0007744" key="18">
    <source>
        <dbReference type="PDB" id="1P1X"/>
    </source>
</evidence>
<evidence type="ECO:0007744" key="19">
    <source>
        <dbReference type="PDB" id="5EKY"/>
    </source>
</evidence>
<evidence type="ECO:0007744" key="20">
    <source>
        <dbReference type="PDB" id="5EL1"/>
    </source>
</evidence>
<evidence type="ECO:0007744" key="21">
    <source>
        <dbReference type="PDB" id="5EMU"/>
    </source>
</evidence>
<evidence type="ECO:0007829" key="22">
    <source>
        <dbReference type="PDB" id="1P1X"/>
    </source>
</evidence>
<evidence type="ECO:0007829" key="23">
    <source>
        <dbReference type="PDB" id="5EKY"/>
    </source>
</evidence>
<gene>
    <name evidence="1 9" type="primary">deoC</name>
    <name type="synonym">dra</name>
    <name type="synonym">thyR</name>
    <name type="ordered locus">b4381</name>
    <name type="ordered locus">JW4344</name>
</gene>
<keyword id="KW-0002">3D-structure</keyword>
<keyword id="KW-0007">Acetylation</keyword>
<keyword id="KW-0963">Cytoplasm</keyword>
<keyword id="KW-0903">Direct protein sequencing</keyword>
<keyword id="KW-0456">Lyase</keyword>
<keyword id="KW-1185">Reference proteome</keyword>
<keyword id="KW-0704">Schiff base</keyword>
<reference key="1">
    <citation type="journal article" date="1982" name="Eur. J. Biochem.">
        <title>The primary structure of Escherichia coli K12 2-deoxyribose 5-phosphate aldolase. Nucleotide sequence of the deoC gene and the amino acid sequence of the enzyme.</title>
        <authorList>
            <person name="Valentin-Hansen P."/>
            <person name="Boetius F."/>
            <person name="Hammer-Jespersen K."/>
            <person name="Svendsen I."/>
        </authorList>
    </citation>
    <scope>NUCLEOTIDE SEQUENCE [GENOMIC DNA]</scope>
    <scope>PROTEIN SEQUENCE OF 1-11</scope>
    <scope>FUNCTION</scope>
    <scope>CATALYTIC ACTIVITY</scope>
    <scope>SUBUNIT</scope>
    <source>
        <strain>K12</strain>
    </source>
</reference>
<reference key="2">
    <citation type="journal article" date="1995" name="Nucleic Acids Res.">
        <title>Analysis of the Escherichia coli genome VI: DNA sequence of the region from 92.8 through 100 minutes.</title>
        <authorList>
            <person name="Burland V.D."/>
            <person name="Plunkett G. III"/>
            <person name="Sofia H.J."/>
            <person name="Daniels D.L."/>
            <person name="Blattner F.R."/>
        </authorList>
    </citation>
    <scope>NUCLEOTIDE SEQUENCE [LARGE SCALE GENOMIC DNA]</scope>
    <source>
        <strain>K12 / MG1655 / ATCC 47076</strain>
    </source>
</reference>
<reference key="3">
    <citation type="journal article" date="1997" name="Science">
        <title>The complete genome sequence of Escherichia coli K-12.</title>
        <authorList>
            <person name="Blattner F.R."/>
            <person name="Plunkett G. III"/>
            <person name="Bloch C.A."/>
            <person name="Perna N.T."/>
            <person name="Burland V."/>
            <person name="Riley M."/>
            <person name="Collado-Vides J."/>
            <person name="Glasner J.D."/>
            <person name="Rode C.K."/>
            <person name="Mayhew G.F."/>
            <person name="Gregor J."/>
            <person name="Davis N.W."/>
            <person name="Kirkpatrick H.A."/>
            <person name="Goeden M.A."/>
            <person name="Rose D.J."/>
            <person name="Mau B."/>
            <person name="Shao Y."/>
        </authorList>
    </citation>
    <scope>NUCLEOTIDE SEQUENCE [LARGE SCALE GENOMIC DNA]</scope>
    <source>
        <strain>K12 / MG1655 / ATCC 47076</strain>
    </source>
</reference>
<reference key="4">
    <citation type="journal article" date="2006" name="Mol. Syst. Biol.">
        <title>Highly accurate genome sequences of Escherichia coli K-12 strains MG1655 and W3110.</title>
        <authorList>
            <person name="Hayashi K."/>
            <person name="Morooka N."/>
            <person name="Yamamoto Y."/>
            <person name="Fujita K."/>
            <person name="Isono K."/>
            <person name="Choi S."/>
            <person name="Ohtsubo E."/>
            <person name="Baba T."/>
            <person name="Wanner B.L."/>
            <person name="Mori H."/>
            <person name="Horiuchi T."/>
        </authorList>
    </citation>
    <scope>NUCLEOTIDE SEQUENCE [LARGE SCALE GENOMIC DNA]</scope>
    <source>
        <strain>K12 / W3110 / ATCC 27325 / DSM 5911</strain>
    </source>
</reference>
<reference key="5">
    <citation type="journal article" date="1994" name="J. Am. Chem. Soc.">
        <title>Unprecedented asymmetric aldol reactions with three aldehyde substrates catalyzed by 2-deoxyribose-5-phosphate aldolase.</title>
        <authorList>
            <person name="Gijsen H.J.M."/>
            <person name="Wong C.H."/>
        </authorList>
    </citation>
    <scope>FUNCTION</scope>
</reference>
<reference key="6">
    <citation type="journal article" date="2009" name="Mol. Cell. Proteomics">
        <title>Lysine acetylation is a highly abundant and evolutionarily conserved modification in Escherichia coli.</title>
        <authorList>
            <person name="Zhang J."/>
            <person name="Sprung R."/>
            <person name="Pei J."/>
            <person name="Tan X."/>
            <person name="Kim S."/>
            <person name="Zhu H."/>
            <person name="Liu C.F."/>
            <person name="Grishin N.V."/>
            <person name="Zhao Y."/>
        </authorList>
    </citation>
    <scope>ACETYLATION [LARGE SCALE ANALYSIS] AT LYS-167</scope>
    <scope>IDENTIFICATION BY MASS SPECTROMETRY</scope>
    <source>
        <strain>K12 / JW1106</strain>
        <strain>K12 / MG1655 / ATCC 47076</strain>
    </source>
</reference>
<reference key="7">
    <citation type="journal article" date="1995" name="Proteins">
        <title>Crystallization and preliminary crystallographic data for class I deoxyribose-5-phosphate aldolase from Escherichia coli: an application of reverse screening.</title>
        <authorList>
            <person name="Stura E.A."/>
            <person name="Ghosh S."/>
            <person name="Garcia-Junceda E."/>
            <person name="Chen L."/>
            <person name="Wong C.H."/>
            <person name="Wilson I.A."/>
        </authorList>
    </citation>
    <scope>CRYSTALLIZATION</scope>
    <scope>SUBUNIT</scope>
</reference>
<reference key="8">
    <citation type="journal article" date="2007" name="Appl. Environ. Microbiol.">
        <title>Sequential aldol condensation catalyzed by hyperthermophilic 2-deoxy-d-ribose-5-phosphate aldolase.</title>
        <authorList>
            <person name="Sakuraba H."/>
            <person name="Yoneda K."/>
            <person name="Yoshihara K."/>
            <person name="Satoh K."/>
            <person name="Kawakami R."/>
            <person name="Uto Y."/>
            <person name="Tsuge H."/>
            <person name="Takahashi K."/>
            <person name="Hori H."/>
            <person name="Ohshima T."/>
        </authorList>
    </citation>
    <scope>FUNCTION</scope>
    <scope>CATALYTIC ACTIVITY</scope>
    <scope>BIOPHYSICOCHEMICAL PROPERTIES</scope>
</reference>
<reference evidence="15 16" key="9">
    <citation type="journal article" date="2001" name="Science">
        <title>Observation of covalent intermediates in an enzyme mechanism at atomic resolution.</title>
        <authorList>
            <person name="Heine A."/>
            <person name="DeSantis G."/>
            <person name="Luz J.G."/>
            <person name="Mitchell M."/>
            <person name="Wong C.-H."/>
            <person name="Wilson I.A."/>
        </authorList>
    </citation>
    <scope>X-RAY CRYSTALLOGRAPHY (1.05 ANGSTROMS)</scope>
    <scope>FUNCTION</scope>
    <scope>CATALYTIC ACTIVITY</scope>
    <scope>ACTIVE SITE</scope>
    <scope>MUTAGENESIS OF CYS-47; ASP-102; LYS-137; LYS-167; LYS-201 AND TYR-259</scope>
</reference>
<reference evidence="17" key="10">
    <citation type="submission" date="2002-01" db="PDB data bank">
        <title>The 1.5A crystal structure of 2-deoxyribose-5-phosphate aldolase.</title>
        <authorList>
            <person name="Zhang R."/>
            <person name="Joachimiak A."/>
            <person name="Edwards A."/>
            <person name="Skarina T."/>
            <person name="Evdokimova E."/>
            <person name="Savchenko A."/>
        </authorList>
    </citation>
    <scope>X-RAY CRYSTALLOGRAPHY (1.40 ANGSTROMS) OF 1-250</scope>
</reference>
<reference evidence="18" key="11">
    <citation type="journal article" date="2004" name="J. Mol. Biol.">
        <title>Analysis of the class I aldolase binding site architecture based on the crystal structure of 2-deoxyribose-5-phosphate aldolase at 0.99A resolution.</title>
        <authorList>
            <person name="Heine A."/>
            <person name="Luz J.G."/>
            <person name="Wong C.H."/>
            <person name="Wilson I.A."/>
        </authorList>
    </citation>
    <scope>X-RAY CRYSTALLOGRAPHY (0.99 ANGSTROMS)</scope>
    <scope>ACTIVE SITE</scope>
</reference>
<reference evidence="19 20 21" key="12">
    <citation type="journal article" date="2016" name="Chem. Sci.">
        <title>Mechanism-based inhibition of an aldolase at high concentrations of its natural substrate acetaldehyde: structural insights and protective strategies.</title>
        <authorList>
            <person name="Dick M."/>
            <person name="Hartmann R."/>
            <person name="Weiergraeber O.H."/>
            <person name="Bisterfeld C."/>
            <person name="Classen T."/>
            <person name="Schwarten M."/>
            <person name="Neudecker P."/>
            <person name="Willbold D."/>
            <person name="Pietruszka J."/>
        </authorList>
    </citation>
    <scope>X-RAY CRYSTALLOGRAPHY (1.10 ANGSTROMS) OF MUTANT GLU-58/TRP-96</scope>
</reference>
<comment type="function">
    <text evidence="2 3 5 7">Catalyzes a reversible aldol reaction between acetaldehyde and D-glyceraldehyde 3-phosphate to generate 2-deoxy-D-ribose 5-phosphate (PubMed:11598300, PubMed:17905878, PubMed:6749498). Can also catalyze the double aldol condensation of three acetaldehyde molecules, leading to the formation of 2,4,6-trideoxyhexose (Ref.5).</text>
</comment>
<comment type="catalytic activity">
    <reaction evidence="1 2 3 5">
        <text>2-deoxy-D-ribose 5-phosphate = D-glyceraldehyde 3-phosphate + acetaldehyde</text>
        <dbReference type="Rhea" id="RHEA:12821"/>
        <dbReference type="ChEBI" id="CHEBI:15343"/>
        <dbReference type="ChEBI" id="CHEBI:59776"/>
        <dbReference type="ChEBI" id="CHEBI:62877"/>
        <dbReference type="EC" id="4.1.2.4"/>
    </reaction>
</comment>
<comment type="biophysicochemical properties">
    <kinetics>
        <KM evidence="3">0.23 mM for 2-deoxy-D-ribose 5-phosphate</KM>
    </kinetics>
    <phDependence>
        <text evidence="3">Optimum pH is 7.5 for 2-deoxy-D-ribose 5-phosphate cleavage.</text>
    </phDependence>
</comment>
<comment type="pathway">
    <text evidence="1 12">Carbohydrate degradation; 2-deoxy-D-ribose 1-phosphate degradation; D-glyceraldehyde 3-phosphate and acetaldehyde from 2-deoxy-alpha-D-ribose 1-phosphate: step 2/2.</text>
</comment>
<comment type="subunit">
    <text evidence="5 6">Monomer and homodimer.</text>
</comment>
<comment type="subcellular location">
    <subcellularLocation>
        <location evidence="1 12">Cytoplasm</location>
    </subcellularLocation>
</comment>
<comment type="similarity">
    <text evidence="1 12">Belongs to the DeoC/FbaB aldolase family. DeoC type 2 subfamily.</text>
</comment>
<organism>
    <name type="scientific">Escherichia coli (strain K12)</name>
    <dbReference type="NCBI Taxonomy" id="83333"/>
    <lineage>
        <taxon>Bacteria</taxon>
        <taxon>Pseudomonadati</taxon>
        <taxon>Pseudomonadota</taxon>
        <taxon>Gammaproteobacteria</taxon>
        <taxon>Enterobacterales</taxon>
        <taxon>Enterobacteriaceae</taxon>
        <taxon>Escherichia</taxon>
    </lineage>
</organism>
<proteinExistence type="evidence at protein level"/>
<sequence length="259" mass="27734">MTDLKASSLRALKLMDLTTLNDDDTDEKVIALCHQAKTPVGNTAAICIYPRFIPIARKTLKEQGTPEIRIATVTNFPHGNDDIDIALAETRAAIAYGADEVDVVFPYRALMAGNEQVGFDLVKACKEACAAANVLLKVIIETGELKDEALIRKASEISIKAGADFIKTSTGKVAVNATPESARIMMEVIRDMGVEKTVGFKPAGGVRTAEDAQKYLAIADELFGADWADARHYRFGASSLLASLLKALGHGDGKSASSY</sequence>
<feature type="chain" id="PRO_0000057296" description="Deoxyribose-phosphate aldolase">
    <location>
        <begin position="1"/>
        <end position="259"/>
    </location>
</feature>
<feature type="active site" description="Proton donor/acceptor" evidence="1 13">
    <location>
        <position position="102"/>
    </location>
</feature>
<feature type="active site" description="Schiff-base intermediate with acetaldehyde" evidence="1 2 14">
    <location>
        <position position="167"/>
    </location>
</feature>
<feature type="active site" description="Proton donor/acceptor" evidence="1 13 14">
    <location>
        <position position="201"/>
    </location>
</feature>
<feature type="modified residue" description="N6-acetyllysine" evidence="4">
    <location>
        <position position="167"/>
    </location>
</feature>
<feature type="mutagenesis site" description="3-fold decrease in catalytic efficiency." evidence="2">
    <original>C</original>
    <variation>A</variation>
    <variation>S</variation>
    <location>
        <position position="47"/>
    </location>
</feature>
<feature type="mutagenesis site" description="44-fold decrease in catalytic efficiency." evidence="2">
    <original>D</original>
    <variation>E</variation>
    <location>
        <position position="102"/>
    </location>
</feature>
<feature type="mutagenesis site" description="2000-fold decrease in catalytic efficiency." evidence="2">
    <original>D</original>
    <variation>L</variation>
    <location>
        <position position="102"/>
    </location>
</feature>
<feature type="mutagenesis site" description="1500-fold decrease in catalytic efficiency." evidence="2">
    <original>D</original>
    <variation>N</variation>
    <location>
        <position position="102"/>
    </location>
</feature>
<feature type="mutagenesis site" description="20-fold decrease in catalytic efficiency." evidence="2">
    <original>K</original>
    <variation>L</variation>
    <location>
        <position position="137"/>
    </location>
</feature>
<feature type="mutagenesis site" description="1000-fold decrease in catalytic efficiency." evidence="2">
    <original>K</original>
    <variation>L</variation>
    <location>
        <position position="167"/>
    </location>
</feature>
<feature type="mutagenesis site" description="20-fold decrease in catalytic efficiency." evidence="2">
    <original>K</original>
    <variation>R</variation>
    <location>
        <position position="167"/>
    </location>
</feature>
<feature type="mutagenesis site" description="1500-fold decrease in catalytic efficiency." evidence="2">
    <original>K</original>
    <variation>L</variation>
    <location>
        <position position="201"/>
    </location>
</feature>
<feature type="mutagenesis site" description="1000-fold decrease in catalytic efficiency." evidence="2">
    <original>K</original>
    <variation>R</variation>
    <location>
        <position position="201"/>
    </location>
</feature>
<feature type="mutagenesis site" description="200-fold decrease in catalytic efficiency." evidence="2">
    <original>Y</original>
    <variation>F</variation>
    <location>
        <position position="259"/>
    </location>
</feature>
<feature type="sequence conflict" description="In Ref. 1; CAA26974." evidence="12" ref="1">
    <original>T</original>
    <variation>N</variation>
    <location>
        <position position="18"/>
    </location>
</feature>
<feature type="helix" evidence="22">
    <location>
        <begin position="3"/>
        <end position="12"/>
    </location>
</feature>
<feature type="strand" evidence="22">
    <location>
        <begin position="15"/>
        <end position="18"/>
    </location>
</feature>
<feature type="helix" evidence="22">
    <location>
        <begin position="26"/>
        <end position="35"/>
    </location>
</feature>
<feature type="strand" evidence="22">
    <location>
        <begin position="44"/>
        <end position="47"/>
    </location>
</feature>
<feature type="helix" evidence="22">
    <location>
        <begin position="50"/>
        <end position="52"/>
    </location>
</feature>
<feature type="helix" evidence="22">
    <location>
        <begin position="53"/>
        <end position="62"/>
    </location>
</feature>
<feature type="strand" evidence="22">
    <location>
        <begin position="68"/>
        <end position="75"/>
    </location>
</feature>
<feature type="turn" evidence="22">
    <location>
        <begin position="76"/>
        <end position="78"/>
    </location>
</feature>
<feature type="helix" evidence="22">
    <location>
        <begin position="83"/>
        <end position="96"/>
    </location>
</feature>
<feature type="strand" evidence="22">
    <location>
        <begin position="99"/>
        <end position="104"/>
    </location>
</feature>
<feature type="helix" evidence="22">
    <location>
        <begin position="107"/>
        <end position="111"/>
    </location>
</feature>
<feature type="helix" evidence="22">
    <location>
        <begin position="116"/>
        <end position="131"/>
    </location>
</feature>
<feature type="strand" evidence="22">
    <location>
        <begin position="135"/>
        <end position="139"/>
    </location>
</feature>
<feature type="helix" evidence="22">
    <location>
        <begin position="142"/>
        <end position="145"/>
    </location>
</feature>
<feature type="helix" evidence="22">
    <location>
        <begin position="148"/>
        <end position="160"/>
    </location>
</feature>
<feature type="strand" evidence="22">
    <location>
        <begin position="164"/>
        <end position="167"/>
    </location>
</feature>
<feature type="strand" evidence="23">
    <location>
        <begin position="171"/>
        <end position="174"/>
    </location>
</feature>
<feature type="helix" evidence="22">
    <location>
        <begin position="179"/>
        <end position="192"/>
    </location>
</feature>
<feature type="turn" evidence="22">
    <location>
        <begin position="195"/>
        <end position="197"/>
    </location>
</feature>
<feature type="strand" evidence="22">
    <location>
        <begin position="199"/>
        <end position="201"/>
    </location>
</feature>
<feature type="strand" evidence="22">
    <location>
        <begin position="203"/>
        <end position="205"/>
    </location>
</feature>
<feature type="helix" evidence="22">
    <location>
        <begin position="209"/>
        <end position="223"/>
    </location>
</feature>
<feature type="turn" evidence="22">
    <location>
        <begin position="230"/>
        <end position="232"/>
    </location>
</feature>
<feature type="strand" evidence="22">
    <location>
        <begin position="235"/>
        <end position="238"/>
    </location>
</feature>
<feature type="helix" evidence="22">
    <location>
        <begin position="240"/>
        <end position="248"/>
    </location>
</feature>
<name>DEOC_ECOLI</name>